<reference key="1">
    <citation type="journal article" date="2004" name="Science">
        <title>The 1.2-megabase genome sequence of Mimivirus.</title>
        <authorList>
            <person name="Raoult D."/>
            <person name="Audic S."/>
            <person name="Robert C."/>
            <person name="Abergel C."/>
            <person name="Renesto P."/>
            <person name="Ogata H."/>
            <person name="La Scola B."/>
            <person name="Susan M."/>
            <person name="Claverie J.-M."/>
        </authorList>
    </citation>
    <scope>NUCLEOTIDE SEQUENCE [LARGE SCALE GENOMIC DNA]</scope>
    <source>
        <strain>Rowbotham-Bradford</strain>
    </source>
</reference>
<proteinExistence type="inferred from homology"/>
<organism>
    <name type="scientific">Acanthamoeba polyphaga mimivirus</name>
    <name type="common">APMV</name>
    <dbReference type="NCBI Taxonomy" id="212035"/>
    <lineage>
        <taxon>Viruses</taxon>
        <taxon>Varidnaviria</taxon>
        <taxon>Bamfordvirae</taxon>
        <taxon>Nucleocytoviricota</taxon>
        <taxon>Megaviricetes</taxon>
        <taxon>Imitervirales</taxon>
        <taxon>Mimiviridae</taxon>
        <taxon>Megamimivirinae</taxon>
        <taxon>Mimivirus</taxon>
        <taxon>Mimivirus bradfordmassiliense</taxon>
    </lineage>
</organism>
<evidence type="ECO:0000256" key="1">
    <source>
        <dbReference type="SAM" id="MobiDB-lite"/>
    </source>
</evidence>
<evidence type="ECO:0000305" key="2"/>
<gene>
    <name type="ordered locus">MIMI_L755</name>
</gene>
<keyword id="KW-1185">Reference proteome</keyword>
<dbReference type="EMBL" id="AY653733">
    <property type="protein sequence ID" value="AAV51015.1"/>
    <property type="molecule type" value="Genomic_DNA"/>
</dbReference>
<dbReference type="KEGG" id="vg:9925413"/>
<dbReference type="Proteomes" id="UP000001134">
    <property type="component" value="Genome"/>
</dbReference>
<organismHost>
    <name type="scientific">Acanthamoeba polyphaga</name>
    <name type="common">Amoeba</name>
    <dbReference type="NCBI Taxonomy" id="5757"/>
</organismHost>
<feature type="chain" id="PRO_0000071348" description="Uncharacterized protein L755">
    <location>
        <begin position="1"/>
        <end position="130"/>
    </location>
</feature>
<feature type="region of interest" description="Disordered" evidence="1">
    <location>
        <begin position="85"/>
        <end position="116"/>
    </location>
</feature>
<sequence>MDKINKIKINETEYYHSDDILALKMKKFDKCVNGRRLIDDFNIKKPNFIYAAFKDDEWIKTDGRSRKFDKVFVKVSWFENYIQENDSDDDCSENDSDGDCSENDSDNDYSENESDCELYNEKNNKCTRYY</sequence>
<name>YL755_MIMIV</name>
<accession>Q5UP07</accession>
<protein>
    <recommendedName>
        <fullName>Uncharacterized protein L755</fullName>
    </recommendedName>
</protein>
<comment type="similarity">
    <text evidence="2">Belongs to the mimivirus L5 family.</text>
</comment>